<name>PDXH_VIBVU</name>
<feature type="chain" id="PRO_0000167768" description="Pyridoxine/pyridoxamine 5'-phosphate oxidase">
    <location>
        <begin position="1"/>
        <end position="211"/>
    </location>
</feature>
<feature type="binding site" evidence="1">
    <location>
        <begin position="7"/>
        <end position="10"/>
    </location>
    <ligand>
        <name>substrate</name>
    </ligand>
</feature>
<feature type="binding site" evidence="1">
    <location>
        <begin position="60"/>
        <end position="65"/>
    </location>
    <ligand>
        <name>FMN</name>
        <dbReference type="ChEBI" id="CHEBI:58210"/>
    </ligand>
</feature>
<feature type="binding site" evidence="1">
    <location>
        <position position="65"/>
    </location>
    <ligand>
        <name>substrate</name>
    </ligand>
</feature>
<feature type="binding site" evidence="1">
    <location>
        <begin position="75"/>
        <end position="76"/>
    </location>
    <ligand>
        <name>FMN</name>
        <dbReference type="ChEBI" id="CHEBI:58210"/>
    </ligand>
</feature>
<feature type="binding site" evidence="1">
    <location>
        <position position="81"/>
    </location>
    <ligand>
        <name>FMN</name>
        <dbReference type="ChEBI" id="CHEBI:58210"/>
    </ligand>
</feature>
<feature type="binding site" evidence="1">
    <location>
        <position position="82"/>
    </location>
    <ligand>
        <name>FMN</name>
        <dbReference type="ChEBI" id="CHEBI:58210"/>
    </ligand>
</feature>
<feature type="binding site" evidence="1">
    <location>
        <position position="104"/>
    </location>
    <ligand>
        <name>FMN</name>
        <dbReference type="ChEBI" id="CHEBI:58210"/>
    </ligand>
</feature>
<feature type="binding site" evidence="1">
    <location>
        <position position="122"/>
    </location>
    <ligand>
        <name>substrate</name>
    </ligand>
</feature>
<feature type="binding site" evidence="1">
    <location>
        <position position="126"/>
    </location>
    <ligand>
        <name>substrate</name>
    </ligand>
</feature>
<feature type="binding site" evidence="1">
    <location>
        <position position="130"/>
    </location>
    <ligand>
        <name>substrate</name>
    </ligand>
</feature>
<feature type="binding site" evidence="1">
    <location>
        <begin position="139"/>
        <end position="140"/>
    </location>
    <ligand>
        <name>FMN</name>
        <dbReference type="ChEBI" id="CHEBI:58210"/>
    </ligand>
</feature>
<feature type="binding site" evidence="1">
    <location>
        <position position="184"/>
    </location>
    <ligand>
        <name>FMN</name>
        <dbReference type="ChEBI" id="CHEBI:58210"/>
    </ligand>
</feature>
<feature type="binding site" evidence="1">
    <location>
        <begin position="190"/>
        <end position="192"/>
    </location>
    <ligand>
        <name>substrate</name>
    </ligand>
</feature>
<feature type="binding site" evidence="1">
    <location>
        <position position="194"/>
    </location>
    <ligand>
        <name>FMN</name>
        <dbReference type="ChEBI" id="CHEBI:58210"/>
    </ligand>
</feature>
<accession>Q8D510</accession>
<dbReference type="EC" id="1.4.3.5" evidence="1"/>
<dbReference type="EMBL" id="AE016796">
    <property type="protein sequence ID" value="AAO08023.1"/>
    <property type="molecule type" value="Genomic_DNA"/>
</dbReference>
<dbReference type="RefSeq" id="WP_011082018.1">
    <property type="nucleotide sequence ID" value="NC_004460.2"/>
</dbReference>
<dbReference type="SMR" id="Q8D510"/>
<dbReference type="KEGG" id="vvu:VV2_1122"/>
<dbReference type="HOGENOM" id="CLU_032263_2_2_6"/>
<dbReference type="UniPathway" id="UPA01068">
    <property type="reaction ID" value="UER00304"/>
</dbReference>
<dbReference type="UniPathway" id="UPA01068">
    <property type="reaction ID" value="UER00305"/>
</dbReference>
<dbReference type="Proteomes" id="UP000002275">
    <property type="component" value="Chromosome 2"/>
</dbReference>
<dbReference type="GO" id="GO:0010181">
    <property type="term" value="F:FMN binding"/>
    <property type="evidence" value="ECO:0007669"/>
    <property type="project" value="UniProtKB-UniRule"/>
</dbReference>
<dbReference type="GO" id="GO:0004733">
    <property type="term" value="F:pyridoxamine phosphate oxidase activity"/>
    <property type="evidence" value="ECO:0007669"/>
    <property type="project" value="UniProtKB-UniRule"/>
</dbReference>
<dbReference type="GO" id="GO:0008615">
    <property type="term" value="P:pyridoxine biosynthetic process"/>
    <property type="evidence" value="ECO:0007669"/>
    <property type="project" value="UniProtKB-KW"/>
</dbReference>
<dbReference type="Gene3D" id="2.30.110.10">
    <property type="entry name" value="Electron Transport, Fmn-binding Protein, Chain A"/>
    <property type="match status" value="1"/>
</dbReference>
<dbReference type="HAMAP" id="MF_01629">
    <property type="entry name" value="PdxH"/>
    <property type="match status" value="1"/>
</dbReference>
<dbReference type="InterPro" id="IPR000659">
    <property type="entry name" value="Pyridox_Oxase"/>
</dbReference>
<dbReference type="InterPro" id="IPR019740">
    <property type="entry name" value="Pyridox_Oxase_CS"/>
</dbReference>
<dbReference type="InterPro" id="IPR011576">
    <property type="entry name" value="Pyridox_Oxase_N"/>
</dbReference>
<dbReference type="InterPro" id="IPR019576">
    <property type="entry name" value="Pyridoxamine_oxidase_dimer_C"/>
</dbReference>
<dbReference type="InterPro" id="IPR012349">
    <property type="entry name" value="Split_barrel_FMN-bd"/>
</dbReference>
<dbReference type="NCBIfam" id="TIGR00558">
    <property type="entry name" value="pdxH"/>
    <property type="match status" value="1"/>
</dbReference>
<dbReference type="NCBIfam" id="NF004231">
    <property type="entry name" value="PRK05679.1"/>
    <property type="match status" value="1"/>
</dbReference>
<dbReference type="PANTHER" id="PTHR10851:SF0">
    <property type="entry name" value="PYRIDOXINE-5'-PHOSPHATE OXIDASE"/>
    <property type="match status" value="1"/>
</dbReference>
<dbReference type="PANTHER" id="PTHR10851">
    <property type="entry name" value="PYRIDOXINE-5-PHOSPHATE OXIDASE"/>
    <property type="match status" value="1"/>
</dbReference>
<dbReference type="Pfam" id="PF10590">
    <property type="entry name" value="PNP_phzG_C"/>
    <property type="match status" value="1"/>
</dbReference>
<dbReference type="Pfam" id="PF01243">
    <property type="entry name" value="PNPOx_N"/>
    <property type="match status" value="1"/>
</dbReference>
<dbReference type="PIRSF" id="PIRSF000190">
    <property type="entry name" value="Pyd_amn-ph_oxd"/>
    <property type="match status" value="1"/>
</dbReference>
<dbReference type="SUPFAM" id="SSF50475">
    <property type="entry name" value="FMN-binding split barrel"/>
    <property type="match status" value="1"/>
</dbReference>
<dbReference type="PROSITE" id="PS01064">
    <property type="entry name" value="PYRIDOX_OXIDASE"/>
    <property type="match status" value="1"/>
</dbReference>
<comment type="function">
    <text evidence="1">Catalyzes the oxidation of either pyridoxine 5'-phosphate (PNP) or pyridoxamine 5'-phosphate (PMP) into pyridoxal 5'-phosphate (PLP).</text>
</comment>
<comment type="catalytic activity">
    <reaction evidence="1">
        <text>pyridoxamine 5'-phosphate + O2 + H2O = pyridoxal 5'-phosphate + H2O2 + NH4(+)</text>
        <dbReference type="Rhea" id="RHEA:15817"/>
        <dbReference type="ChEBI" id="CHEBI:15377"/>
        <dbReference type="ChEBI" id="CHEBI:15379"/>
        <dbReference type="ChEBI" id="CHEBI:16240"/>
        <dbReference type="ChEBI" id="CHEBI:28938"/>
        <dbReference type="ChEBI" id="CHEBI:58451"/>
        <dbReference type="ChEBI" id="CHEBI:597326"/>
        <dbReference type="EC" id="1.4.3.5"/>
    </reaction>
</comment>
<comment type="catalytic activity">
    <reaction evidence="1">
        <text>pyridoxine 5'-phosphate + O2 = pyridoxal 5'-phosphate + H2O2</text>
        <dbReference type="Rhea" id="RHEA:15149"/>
        <dbReference type="ChEBI" id="CHEBI:15379"/>
        <dbReference type="ChEBI" id="CHEBI:16240"/>
        <dbReference type="ChEBI" id="CHEBI:58589"/>
        <dbReference type="ChEBI" id="CHEBI:597326"/>
        <dbReference type="EC" id="1.4.3.5"/>
    </reaction>
</comment>
<comment type="cofactor">
    <cofactor evidence="1">
        <name>FMN</name>
        <dbReference type="ChEBI" id="CHEBI:58210"/>
    </cofactor>
    <text evidence="1">Binds 1 FMN per subunit.</text>
</comment>
<comment type="pathway">
    <text evidence="1">Cofactor metabolism; pyridoxal 5'-phosphate salvage; pyridoxal 5'-phosphate from pyridoxamine 5'-phosphate: step 1/1.</text>
</comment>
<comment type="pathway">
    <text evidence="1">Cofactor metabolism; pyridoxal 5'-phosphate salvage; pyridoxal 5'-phosphate from pyridoxine 5'-phosphate: step 1/1.</text>
</comment>
<comment type="subunit">
    <text evidence="1">Homodimer.</text>
</comment>
<comment type="similarity">
    <text evidence="1">Belongs to the pyridoxamine 5'-phosphate oxidase family.</text>
</comment>
<proteinExistence type="inferred from homology"/>
<sequence>MELADIRREYTKGGLRRKDLKNDPIDQFNFWLEQAIKANLSDPTAMTVATVDKDGMPFQRIVLLKNVDKDGFVFYTNLGSRKAQHLEHNSKISLHFPWHPLERQVHITGVAEKLTAMENMKYFTSRPKESQLAAMASRQSSRISARGVLEGKFLELKQKFANGEIPVPSFWGGFRVKPQSIEFWQGGEHRLHDRFLYSQEQGEWHIDRLAP</sequence>
<keyword id="KW-0285">Flavoprotein</keyword>
<keyword id="KW-0288">FMN</keyword>
<keyword id="KW-0560">Oxidoreductase</keyword>
<keyword id="KW-0664">Pyridoxine biosynthesis</keyword>
<organism>
    <name type="scientific">Vibrio vulnificus (strain CMCP6)</name>
    <dbReference type="NCBI Taxonomy" id="216895"/>
    <lineage>
        <taxon>Bacteria</taxon>
        <taxon>Pseudomonadati</taxon>
        <taxon>Pseudomonadota</taxon>
        <taxon>Gammaproteobacteria</taxon>
        <taxon>Vibrionales</taxon>
        <taxon>Vibrionaceae</taxon>
        <taxon>Vibrio</taxon>
    </lineage>
</organism>
<reference key="1">
    <citation type="submission" date="2002-12" db="EMBL/GenBank/DDBJ databases">
        <title>Complete genome sequence of Vibrio vulnificus CMCP6.</title>
        <authorList>
            <person name="Rhee J.H."/>
            <person name="Kim S.Y."/>
            <person name="Chung S.S."/>
            <person name="Kim J.J."/>
            <person name="Moon Y.H."/>
            <person name="Jeong H."/>
            <person name="Choy H.E."/>
        </authorList>
    </citation>
    <scope>NUCLEOTIDE SEQUENCE [LARGE SCALE GENOMIC DNA]</scope>
    <source>
        <strain>CMCP6</strain>
    </source>
</reference>
<gene>
    <name evidence="1" type="primary">pdxH</name>
    <name type="ordered locus">VV2_1122</name>
</gene>
<evidence type="ECO:0000255" key="1">
    <source>
        <dbReference type="HAMAP-Rule" id="MF_01629"/>
    </source>
</evidence>
<protein>
    <recommendedName>
        <fullName evidence="1">Pyridoxine/pyridoxamine 5'-phosphate oxidase</fullName>
        <ecNumber evidence="1">1.4.3.5</ecNumber>
    </recommendedName>
    <alternativeName>
        <fullName evidence="1">PNP/PMP oxidase</fullName>
        <shortName evidence="1">PNPOx</shortName>
    </alternativeName>
    <alternativeName>
        <fullName evidence="1">Pyridoxal 5'-phosphate synthase</fullName>
    </alternativeName>
</protein>